<evidence type="ECO:0000305" key="1"/>
<comment type="function">
    <text>This polymerase possesses two enzymatic activities: DNA synthesis (polymerase) and an exonucleolytic activity that degrades single-stranded DNA in the 3'- to 5'-direction.</text>
</comment>
<comment type="catalytic activity">
    <reaction>
        <text>DNA(n) + a 2'-deoxyribonucleoside 5'-triphosphate = DNA(n+1) + diphosphate</text>
        <dbReference type="Rhea" id="RHEA:22508"/>
        <dbReference type="Rhea" id="RHEA-COMP:17339"/>
        <dbReference type="Rhea" id="RHEA-COMP:17340"/>
        <dbReference type="ChEBI" id="CHEBI:33019"/>
        <dbReference type="ChEBI" id="CHEBI:61560"/>
        <dbReference type="ChEBI" id="CHEBI:173112"/>
        <dbReference type="EC" id="2.7.7.7"/>
    </reaction>
</comment>
<comment type="similarity">
    <text evidence="1">Belongs to the DNA polymerase type-B family.</text>
</comment>
<organism>
    <name type="scientific">Sulfolobus acidocaldarius (strain ATCC 33909 / DSM 639 / JCM 8929 / NBRC 15157 / NCIMB 11770)</name>
    <dbReference type="NCBI Taxonomy" id="330779"/>
    <lineage>
        <taxon>Archaea</taxon>
        <taxon>Thermoproteota</taxon>
        <taxon>Thermoprotei</taxon>
        <taxon>Sulfolobales</taxon>
        <taxon>Sulfolobaceae</taxon>
        <taxon>Sulfolobus</taxon>
    </lineage>
</organism>
<name>DPOL1_SULAC</name>
<protein>
    <recommendedName>
        <fullName>DNA polymerase 1</fullName>
        <ecNumber>2.7.7.7</ecNumber>
    </recommendedName>
    <alternativeName>
        <fullName>DNA polymerase I</fullName>
    </alternativeName>
</protein>
<reference key="1">
    <citation type="journal article" date="1996" name="Gene">
        <title>The DNA polymerase-encoding gene from a thermoacidophilic archaeon Sulfolobus acidocaldarius.</title>
        <authorList>
            <person name="Datukishvili N."/>
            <person name="Pokholok D."/>
            <person name="Lottspeich F."/>
            <person name="Prangishvili D."/>
            <person name="Rechinsky V."/>
        </authorList>
    </citation>
    <scope>NUCLEOTIDE SEQUENCE [GENOMIC DNA]</scope>
    <source>
        <strain>ATCC 33909 / DSM 639 / JCM 8929 / NBRC 15157 / NCIMB 11770</strain>
    </source>
</reference>
<reference key="2">
    <citation type="journal article" date="2005" name="J. Bacteriol.">
        <title>The genome of Sulfolobus acidocaldarius, a model organism of the Crenarchaeota.</title>
        <authorList>
            <person name="Chen L."/>
            <person name="Bruegger K."/>
            <person name="Skovgaard M."/>
            <person name="Redder P."/>
            <person name="She Q."/>
            <person name="Torarinsson E."/>
            <person name="Greve B."/>
            <person name="Awayez M."/>
            <person name="Zibat A."/>
            <person name="Klenk H.-P."/>
            <person name="Garrett R.A."/>
        </authorList>
    </citation>
    <scope>NUCLEOTIDE SEQUENCE [LARGE SCALE GENOMIC DNA]</scope>
    <source>
        <strain>ATCC 33909 / DSM 639 / JCM 8929 / NBRC 15157 / NCIMB 11770</strain>
    </source>
</reference>
<reference key="3">
    <citation type="journal article" date="1985" name="Nucleic Acids Res.">
        <title>Purification and characterization of DNA polymerase from the archaebacterium Sulfolobus acidocaldarius.</title>
        <authorList>
            <person name="Klimczak L.J."/>
            <person name="Grummt F."/>
            <person name="Burger K.J."/>
        </authorList>
    </citation>
    <scope>CHARACTERIZATION</scope>
    <source>
        <strain>ATCC 33909 / DSM 639 / JCM 8929 / NBRC 15157 / NCIMB 11770</strain>
    </source>
</reference>
<gene>
    <name type="primary">dpo1</name>
    <name type="synonym">polS</name>
    <name type="ordered locus">Saci_1537</name>
</gene>
<dbReference type="EC" id="2.7.7.7"/>
<dbReference type="EMBL" id="U33846">
    <property type="protein sequence ID" value="AAC44598.1"/>
    <property type="molecule type" value="Genomic_DNA"/>
</dbReference>
<dbReference type="EMBL" id="CP000077">
    <property type="protein sequence ID" value="AAY80851.1"/>
    <property type="molecule type" value="Genomic_DNA"/>
</dbReference>
<dbReference type="PIR" id="JC5186">
    <property type="entry name" value="JC5186"/>
</dbReference>
<dbReference type="RefSeq" id="WP_011278353.1">
    <property type="nucleotide sequence ID" value="NC_007181.1"/>
</dbReference>
<dbReference type="SMR" id="P95690"/>
<dbReference type="STRING" id="330779.Saci_1537"/>
<dbReference type="GeneID" id="14552031"/>
<dbReference type="KEGG" id="sai:Saci_1537"/>
<dbReference type="PATRIC" id="fig|330779.12.peg.1478"/>
<dbReference type="eggNOG" id="arCOG15272">
    <property type="taxonomic scope" value="Archaea"/>
</dbReference>
<dbReference type="HOGENOM" id="CLU_000203_6_0_2"/>
<dbReference type="BRENDA" id="2.7.7.7">
    <property type="organism ID" value="6160"/>
</dbReference>
<dbReference type="Proteomes" id="UP000001018">
    <property type="component" value="Chromosome"/>
</dbReference>
<dbReference type="GO" id="GO:0003677">
    <property type="term" value="F:DNA binding"/>
    <property type="evidence" value="ECO:0007669"/>
    <property type="project" value="UniProtKB-KW"/>
</dbReference>
<dbReference type="GO" id="GO:0003887">
    <property type="term" value="F:DNA-directed DNA polymerase activity"/>
    <property type="evidence" value="ECO:0007669"/>
    <property type="project" value="UniProtKB-KW"/>
</dbReference>
<dbReference type="GO" id="GO:0004527">
    <property type="term" value="F:exonuclease activity"/>
    <property type="evidence" value="ECO:0007669"/>
    <property type="project" value="UniProtKB-KW"/>
</dbReference>
<dbReference type="GO" id="GO:0000166">
    <property type="term" value="F:nucleotide binding"/>
    <property type="evidence" value="ECO:0007669"/>
    <property type="project" value="InterPro"/>
</dbReference>
<dbReference type="GO" id="GO:0006261">
    <property type="term" value="P:DNA-templated DNA replication"/>
    <property type="evidence" value="ECO:0007669"/>
    <property type="project" value="TreeGrafter"/>
</dbReference>
<dbReference type="CDD" id="cd05783">
    <property type="entry name" value="DNA_polB_B1_exo"/>
    <property type="match status" value="1"/>
</dbReference>
<dbReference type="FunFam" id="1.10.287.690:FF:000011">
    <property type="entry name" value="DNA polymerase"/>
    <property type="match status" value="1"/>
</dbReference>
<dbReference type="Gene3D" id="1.10.287.1390">
    <property type="match status" value="2"/>
</dbReference>
<dbReference type="Gene3D" id="3.30.342.10">
    <property type="entry name" value="DNA Polymerase, chain B, domain 1"/>
    <property type="match status" value="1"/>
</dbReference>
<dbReference type="Gene3D" id="1.10.287.690">
    <property type="entry name" value="Helix hairpin bin"/>
    <property type="match status" value="1"/>
</dbReference>
<dbReference type="Gene3D" id="3.90.1600.10">
    <property type="entry name" value="Palm domain of DNA polymerase"/>
    <property type="match status" value="1"/>
</dbReference>
<dbReference type="Gene3D" id="3.30.420.10">
    <property type="entry name" value="Ribonuclease H-like superfamily/Ribonuclease H"/>
    <property type="match status" value="1"/>
</dbReference>
<dbReference type="InterPro" id="IPR006172">
    <property type="entry name" value="DNA-dir_DNA_pol_B"/>
</dbReference>
<dbReference type="InterPro" id="IPR017964">
    <property type="entry name" value="DNA-dir_DNA_pol_B_CS"/>
</dbReference>
<dbReference type="InterPro" id="IPR006133">
    <property type="entry name" value="DNA-dir_DNA_pol_B_exonuc"/>
</dbReference>
<dbReference type="InterPro" id="IPR006134">
    <property type="entry name" value="DNA-dir_DNA_pol_B_multi_dom"/>
</dbReference>
<dbReference type="InterPro" id="IPR043502">
    <property type="entry name" value="DNA/RNA_pol_sf"/>
</dbReference>
<dbReference type="InterPro" id="IPR023211">
    <property type="entry name" value="DNA_pol_palm_dom_sf"/>
</dbReference>
<dbReference type="InterPro" id="IPR050240">
    <property type="entry name" value="DNA_pol_type-B"/>
</dbReference>
<dbReference type="InterPro" id="IPR012337">
    <property type="entry name" value="RNaseH-like_sf"/>
</dbReference>
<dbReference type="InterPro" id="IPR036397">
    <property type="entry name" value="RNaseH_sf"/>
</dbReference>
<dbReference type="NCBIfam" id="NF004415">
    <property type="entry name" value="PRK05761.1-1"/>
    <property type="match status" value="1"/>
</dbReference>
<dbReference type="NCBIfam" id="NF004417">
    <property type="entry name" value="PRK05761.1-3"/>
    <property type="match status" value="1"/>
</dbReference>
<dbReference type="PANTHER" id="PTHR10322:SF20">
    <property type="entry name" value="DNA POLYMERASE 1"/>
    <property type="match status" value="1"/>
</dbReference>
<dbReference type="PANTHER" id="PTHR10322">
    <property type="entry name" value="DNA POLYMERASE CATALYTIC SUBUNIT"/>
    <property type="match status" value="1"/>
</dbReference>
<dbReference type="Pfam" id="PF00136">
    <property type="entry name" value="DNA_pol_B"/>
    <property type="match status" value="1"/>
</dbReference>
<dbReference type="Pfam" id="PF03104">
    <property type="entry name" value="DNA_pol_B_exo1"/>
    <property type="match status" value="1"/>
</dbReference>
<dbReference type="PRINTS" id="PR00106">
    <property type="entry name" value="DNAPOLB"/>
</dbReference>
<dbReference type="SMART" id="SM00486">
    <property type="entry name" value="POLBc"/>
    <property type="match status" value="1"/>
</dbReference>
<dbReference type="SUPFAM" id="SSF56672">
    <property type="entry name" value="DNA/RNA polymerases"/>
    <property type="match status" value="1"/>
</dbReference>
<dbReference type="SUPFAM" id="SSF53098">
    <property type="entry name" value="Ribonuclease H-like"/>
    <property type="match status" value="1"/>
</dbReference>
<dbReference type="PROSITE" id="PS00116">
    <property type="entry name" value="DNA_POLYMERASE_B"/>
    <property type="match status" value="1"/>
</dbReference>
<feature type="chain" id="PRO_0000046482" description="DNA polymerase 1">
    <location>
        <begin position="1"/>
        <end position="876"/>
    </location>
</feature>
<feature type="sequence conflict" description="In Ref. 1; AAC44598." evidence="1" ref="1">
    <original>AFADAD</original>
    <variation>LSDAY</variation>
    <location>
        <begin position="198"/>
        <end position="203"/>
    </location>
</feature>
<feature type="sequence conflict" description="In Ref. 1; AAC44598." evidence="1" ref="1">
    <original>R</original>
    <variation>S</variation>
    <location>
        <position position="364"/>
    </location>
</feature>
<feature type="sequence conflict" description="In Ref. 1; AAC44598." evidence="1" ref="1">
    <original>D</original>
    <variation>Y</variation>
    <location>
        <position position="378"/>
    </location>
</feature>
<feature type="sequence conflict" description="In Ref. 1; AAC44598." evidence="1" ref="1">
    <original>L</original>
    <variation>M</variation>
    <location>
        <position position="399"/>
    </location>
</feature>
<feature type="sequence conflict" description="In Ref. 1; AAC44598." evidence="1" ref="1">
    <original>D</original>
    <variation>E</variation>
    <location>
        <position position="532"/>
    </location>
</feature>
<feature type="sequence conflict" description="In Ref. 1; AAC44598." evidence="1" ref="1">
    <original>IT</original>
    <variation>YQ</variation>
    <location>
        <begin position="564"/>
        <end position="565"/>
    </location>
</feature>
<feature type="sequence conflict" description="In Ref. 1; AAC44598." evidence="1" ref="1">
    <original>KS</original>
    <variation>NT</variation>
    <location>
        <begin position="686"/>
        <end position="687"/>
    </location>
</feature>
<feature type="sequence conflict" description="In Ref. 1; AAC44598." evidence="1" ref="1">
    <original>F</original>
    <variation>Y</variation>
    <location>
        <position position="693"/>
    </location>
</feature>
<feature type="sequence conflict" description="In Ref. 1; AAC44598." evidence="1" ref="1">
    <original>N</original>
    <variation>Y</variation>
    <location>
        <position position="761"/>
    </location>
</feature>
<feature type="sequence conflict" description="In Ref. 1; AAC44598." evidence="1" ref="1">
    <original>PI</original>
    <variation>AY</variation>
    <location>
        <begin position="826"/>
        <end position="827"/>
    </location>
</feature>
<proteinExistence type="evidence at protein level"/>
<keyword id="KW-0235">DNA replication</keyword>
<keyword id="KW-0238">DNA-binding</keyword>
<keyword id="KW-0239">DNA-directed DNA polymerase</keyword>
<keyword id="KW-0269">Exonuclease</keyword>
<keyword id="KW-0378">Hydrolase</keyword>
<keyword id="KW-0540">Nuclease</keyword>
<keyword id="KW-0548">Nucleotidyltransferase</keyword>
<keyword id="KW-1185">Reference proteome</keyword>
<keyword id="KW-0808">Transferase</keyword>
<accession>P95690</accession>
<accession>Q4J8M7</accession>
<sequence length="876" mass="100778">MSKQATLFDFSIKKNESKEQTNQESVEVPKQTANRTKIEWIKEAEDGKVYFLLQVDYDGKKSRAVCKLYDKEGKKIYIMQDESGHKPYFLTDIDPDKVNKITKVVRDPSFDHLELINKVDPYTGKKIRLTKIVVKDPLAVRRMRSSLPKAYEAHIKYYNNYVYDNGLIPGLIYKVNKGKLTQLNPELKGEEINEIKKAFADADEMTKETVNDWIPILETEVPDIKRVSLDIEVYTPNRGRIPDPERAEFPIISVALAGNDGSKIVLALKREDVNSDFSKKDGVQVEIFDSEKKLLARLFEIIREYPMLLTFNGDDFDIPYIYFRALRLNFSPEEVPLDVVSGEGKFLAGIHIDLYKFFFNRAVRIYAFEGKYSEYSLDAVATALLGISKVKLDTFISFLDIDKLIEYNLRDAEITLKLTTFNNNLVLKLMVLLARISKLGLEELTRTEVSTWIKNLYYWEHRKRNWLIPLKEEILVRSNQVKTAAVIKGKKYKGAVVIDPPAGVYFNVVVLDFASLYPSIIKNWNISYETIDIDECTKKVWVEDETGEKLHYVCMDKPGITAVITGLIRDFRVKVYKKKAKYSNISEEQRSLYDVVQRAMKVFINATYGVFGAENFPLYAPAVAESVTAIGRYIITTTYKQAEKLNLKVIYGDTDSLFLYNPTKDKLEELIKFVKQNFNLDLEVDKSYKYVAFSGLKKNYFGVYPDGKTEIKGMLAKKRNTPEFIKKEFAEIKNMLASLNSPNDIPEVKNKLEIKIKDIYNKLRNKGYNLDDLAFRIMLSKPLDSYTKNTPQHVKAGLQLRAFGVNVLPRDVIMFVKVKSKDGVKPIQLAKISEIDIEKYVETLRTTFEQILKAFGISWDEIVSTISIDSFFGSKK</sequence>